<proteinExistence type="inferred from homology"/>
<name>NUOK_RICBR</name>
<keyword id="KW-0997">Cell inner membrane</keyword>
<keyword id="KW-1003">Cell membrane</keyword>
<keyword id="KW-0472">Membrane</keyword>
<keyword id="KW-0520">NAD</keyword>
<keyword id="KW-0874">Quinone</keyword>
<keyword id="KW-1278">Translocase</keyword>
<keyword id="KW-0812">Transmembrane</keyword>
<keyword id="KW-1133">Transmembrane helix</keyword>
<keyword id="KW-0813">Transport</keyword>
<protein>
    <recommendedName>
        <fullName evidence="1">NADH-quinone oxidoreductase subunit K</fullName>
        <ecNumber evidence="1">7.1.1.-</ecNumber>
    </recommendedName>
    <alternativeName>
        <fullName evidence="1">NADH dehydrogenase I subunit K</fullName>
    </alternativeName>
    <alternativeName>
        <fullName evidence="1">NDH-1 subunit K</fullName>
    </alternativeName>
</protein>
<organism>
    <name type="scientific">Rickettsia bellii (strain RML369-C)</name>
    <dbReference type="NCBI Taxonomy" id="336407"/>
    <lineage>
        <taxon>Bacteria</taxon>
        <taxon>Pseudomonadati</taxon>
        <taxon>Pseudomonadota</taxon>
        <taxon>Alphaproteobacteria</taxon>
        <taxon>Rickettsiales</taxon>
        <taxon>Rickettsiaceae</taxon>
        <taxon>Rickettsieae</taxon>
        <taxon>Rickettsia</taxon>
        <taxon>belli group</taxon>
    </lineage>
</organism>
<sequence>MRILNMNEYIGLNHYLILSSLVFTIGMLGLFMHRKNIINILMSIELMLLAVNINFVAFSVYMQELSGQIFSIIILTIAAAETSIGLAILLIYFRNKGSIEVTDINQMRG</sequence>
<reference key="1">
    <citation type="journal article" date="2006" name="PLoS Genet.">
        <title>Genome sequence of Rickettsia bellii illuminates the role of amoebae in gene exchanges between intracellular pathogens.</title>
        <authorList>
            <person name="Ogata H."/>
            <person name="La Scola B."/>
            <person name="Audic S."/>
            <person name="Renesto P."/>
            <person name="Blanc G."/>
            <person name="Robert C."/>
            <person name="Fournier P.-E."/>
            <person name="Claverie J.-M."/>
            <person name="Raoult D."/>
        </authorList>
    </citation>
    <scope>NUCLEOTIDE SEQUENCE [LARGE SCALE GENOMIC DNA]</scope>
    <source>
        <strain>RML369-C</strain>
    </source>
</reference>
<comment type="function">
    <text evidence="1">NDH-1 shuttles electrons from NADH, via FMN and iron-sulfur (Fe-S) centers, to quinones in the respiratory chain. The immediate electron acceptor for the enzyme in this species is believed to be ubiquinone. Couples the redox reaction to proton translocation (for every two electrons transferred, four hydrogen ions are translocated across the cytoplasmic membrane), and thus conserves the redox energy in a proton gradient.</text>
</comment>
<comment type="catalytic activity">
    <reaction evidence="1">
        <text>a quinone + NADH + 5 H(+)(in) = a quinol + NAD(+) + 4 H(+)(out)</text>
        <dbReference type="Rhea" id="RHEA:57888"/>
        <dbReference type="ChEBI" id="CHEBI:15378"/>
        <dbReference type="ChEBI" id="CHEBI:24646"/>
        <dbReference type="ChEBI" id="CHEBI:57540"/>
        <dbReference type="ChEBI" id="CHEBI:57945"/>
        <dbReference type="ChEBI" id="CHEBI:132124"/>
    </reaction>
</comment>
<comment type="subunit">
    <text evidence="1">NDH-1 is composed of 14 different subunits. Subunits NuoA, H, J, K, L, M, N constitute the membrane sector of the complex.</text>
</comment>
<comment type="subcellular location">
    <subcellularLocation>
        <location evidence="1">Cell inner membrane</location>
        <topology evidence="1">Multi-pass membrane protein</topology>
    </subcellularLocation>
</comment>
<comment type="similarity">
    <text evidence="1">Belongs to the complex I subunit 4L family.</text>
</comment>
<evidence type="ECO:0000255" key="1">
    <source>
        <dbReference type="HAMAP-Rule" id="MF_01456"/>
    </source>
</evidence>
<dbReference type="EC" id="7.1.1.-" evidence="1"/>
<dbReference type="EMBL" id="CP000087">
    <property type="protein sequence ID" value="ABE04167.1"/>
    <property type="molecule type" value="Genomic_DNA"/>
</dbReference>
<dbReference type="SMR" id="Q1RKE7"/>
<dbReference type="KEGG" id="rbe:RBE_0086"/>
<dbReference type="eggNOG" id="COG0713">
    <property type="taxonomic scope" value="Bacteria"/>
</dbReference>
<dbReference type="HOGENOM" id="CLU_144724_2_0_5"/>
<dbReference type="Proteomes" id="UP000001951">
    <property type="component" value="Chromosome"/>
</dbReference>
<dbReference type="GO" id="GO:0030964">
    <property type="term" value="C:NADH dehydrogenase complex"/>
    <property type="evidence" value="ECO:0007669"/>
    <property type="project" value="TreeGrafter"/>
</dbReference>
<dbReference type="GO" id="GO:0005886">
    <property type="term" value="C:plasma membrane"/>
    <property type="evidence" value="ECO:0007669"/>
    <property type="project" value="UniProtKB-SubCell"/>
</dbReference>
<dbReference type="GO" id="GO:0050136">
    <property type="term" value="F:NADH:ubiquinone reductase (non-electrogenic) activity"/>
    <property type="evidence" value="ECO:0007669"/>
    <property type="project" value="UniProtKB-UniRule"/>
</dbReference>
<dbReference type="GO" id="GO:0048038">
    <property type="term" value="F:quinone binding"/>
    <property type="evidence" value="ECO:0007669"/>
    <property type="project" value="UniProtKB-KW"/>
</dbReference>
<dbReference type="GO" id="GO:0042773">
    <property type="term" value="P:ATP synthesis coupled electron transport"/>
    <property type="evidence" value="ECO:0007669"/>
    <property type="project" value="InterPro"/>
</dbReference>
<dbReference type="FunFam" id="1.10.287.3510:FF:000001">
    <property type="entry name" value="NADH-quinone oxidoreductase subunit K"/>
    <property type="match status" value="1"/>
</dbReference>
<dbReference type="Gene3D" id="1.10.287.3510">
    <property type="match status" value="1"/>
</dbReference>
<dbReference type="HAMAP" id="MF_01456">
    <property type="entry name" value="NDH1_NuoK"/>
    <property type="match status" value="1"/>
</dbReference>
<dbReference type="InterPro" id="IPR001133">
    <property type="entry name" value="NADH_UbQ_OxRdtase_chain4L/K"/>
</dbReference>
<dbReference type="InterPro" id="IPR039428">
    <property type="entry name" value="NUOK/Mnh_C1-like"/>
</dbReference>
<dbReference type="NCBIfam" id="NF004320">
    <property type="entry name" value="PRK05715.1-2"/>
    <property type="match status" value="1"/>
</dbReference>
<dbReference type="NCBIfam" id="NF004321">
    <property type="entry name" value="PRK05715.1-3"/>
    <property type="match status" value="1"/>
</dbReference>
<dbReference type="NCBIfam" id="NF004323">
    <property type="entry name" value="PRK05715.1-5"/>
    <property type="match status" value="1"/>
</dbReference>
<dbReference type="PANTHER" id="PTHR11434:SF21">
    <property type="entry name" value="NADH DEHYDROGENASE SUBUNIT 4L-RELATED"/>
    <property type="match status" value="1"/>
</dbReference>
<dbReference type="PANTHER" id="PTHR11434">
    <property type="entry name" value="NADH-UBIQUINONE OXIDOREDUCTASE SUBUNIT ND4L"/>
    <property type="match status" value="1"/>
</dbReference>
<dbReference type="Pfam" id="PF00420">
    <property type="entry name" value="Oxidored_q2"/>
    <property type="match status" value="1"/>
</dbReference>
<gene>
    <name evidence="1" type="primary">nuoK</name>
    <name type="ordered locus">RBE_0086</name>
</gene>
<accession>Q1RKE7</accession>
<feature type="chain" id="PRO_0000287846" description="NADH-quinone oxidoreductase subunit K">
    <location>
        <begin position="1"/>
        <end position="109"/>
    </location>
</feature>
<feature type="transmembrane region" description="Helical" evidence="1">
    <location>
        <begin position="12"/>
        <end position="32"/>
    </location>
</feature>
<feature type="transmembrane region" description="Helical" evidence="1">
    <location>
        <begin position="40"/>
        <end position="60"/>
    </location>
</feature>
<feature type="transmembrane region" description="Helical" evidence="1">
    <location>
        <begin position="72"/>
        <end position="92"/>
    </location>
</feature>